<keyword id="KW-0030">Aminoacyl-tRNA synthetase</keyword>
<keyword id="KW-0067">ATP-binding</keyword>
<keyword id="KW-0963">Cytoplasm</keyword>
<keyword id="KW-0436">Ligase</keyword>
<keyword id="KW-0547">Nucleotide-binding</keyword>
<keyword id="KW-0648">Protein biosynthesis</keyword>
<organism>
    <name type="scientific">Dehalococcoides mccartyi (strain ATCC BAA-2266 / KCTC 15142 / 195)</name>
    <name type="common">Dehalococcoides ethenogenes (strain 195)</name>
    <dbReference type="NCBI Taxonomy" id="243164"/>
    <lineage>
        <taxon>Bacteria</taxon>
        <taxon>Bacillati</taxon>
        <taxon>Chloroflexota</taxon>
        <taxon>Dehalococcoidia</taxon>
        <taxon>Dehalococcoidales</taxon>
        <taxon>Dehalococcoidaceae</taxon>
        <taxon>Dehalococcoides</taxon>
    </lineage>
</organism>
<proteinExistence type="inferred from homology"/>
<evidence type="ECO:0000255" key="1">
    <source>
        <dbReference type="HAMAP-Rule" id="MF_00127"/>
    </source>
</evidence>
<protein>
    <recommendedName>
        <fullName evidence="1">Histidine--tRNA ligase</fullName>
        <ecNumber evidence="1">6.1.1.21</ecNumber>
    </recommendedName>
    <alternativeName>
        <fullName evidence="1">Histidyl-tRNA synthetase</fullName>
        <shortName evidence="1">HisRS</shortName>
    </alternativeName>
</protein>
<comment type="catalytic activity">
    <reaction evidence="1">
        <text>tRNA(His) + L-histidine + ATP = L-histidyl-tRNA(His) + AMP + diphosphate + H(+)</text>
        <dbReference type="Rhea" id="RHEA:17313"/>
        <dbReference type="Rhea" id="RHEA-COMP:9665"/>
        <dbReference type="Rhea" id="RHEA-COMP:9689"/>
        <dbReference type="ChEBI" id="CHEBI:15378"/>
        <dbReference type="ChEBI" id="CHEBI:30616"/>
        <dbReference type="ChEBI" id="CHEBI:33019"/>
        <dbReference type="ChEBI" id="CHEBI:57595"/>
        <dbReference type="ChEBI" id="CHEBI:78442"/>
        <dbReference type="ChEBI" id="CHEBI:78527"/>
        <dbReference type="ChEBI" id="CHEBI:456215"/>
        <dbReference type="EC" id="6.1.1.21"/>
    </reaction>
</comment>
<comment type="subunit">
    <text evidence="1">Homodimer.</text>
</comment>
<comment type="subcellular location">
    <subcellularLocation>
        <location evidence="1">Cytoplasm</location>
    </subcellularLocation>
</comment>
<comment type="similarity">
    <text evidence="1">Belongs to the class-II aminoacyl-tRNA synthetase family.</text>
</comment>
<name>SYH_DEHM1</name>
<sequence length="418" mass="46860">MYQSPRGTEDILPEDQPYWHFVRQQAARIAALYGYQRTDTPVFEDAGLFVRSVGEGTDIVSKEMYTFEDRGGDKLTLRPEGTAPICRAYLEHGMQTRTKPVKLYYLSSIFRYDRPQAGRYRQHHQFGFEAIGEADASLDAEVIEMAWRFYNLLGINDLSLELNSIGCRECRPAYISALKAYYGQHEGKLCSDCKTRLDKNTLRLLDCKREECQCVAENAPRSADYLCPDCLAHYNRLKECLTVVDLPFHENFRLVRGLDYYSRTVFEIQPRIEGAQSTIGGGGRYDGLIEQLGGEPTPAIGFATGIERIILNLKRQGITPPPLPSPSVFLAYMGEAASLASIALASDLRKAGIGIYQTYAQKSIKAQLRQANSLGADWAVILGEEELKQGCAVLRNMKEAGQATIPLDQLICEIKKQI</sequence>
<reference key="1">
    <citation type="journal article" date="2005" name="Science">
        <title>Genome sequence of the PCE-dechlorinating bacterium Dehalococcoides ethenogenes.</title>
        <authorList>
            <person name="Seshadri R."/>
            <person name="Adrian L."/>
            <person name="Fouts D.E."/>
            <person name="Eisen J.A."/>
            <person name="Phillippy A.M."/>
            <person name="Methe B.A."/>
            <person name="Ward N.L."/>
            <person name="Nelson W.C."/>
            <person name="DeBoy R.T."/>
            <person name="Khouri H.M."/>
            <person name="Kolonay J.F."/>
            <person name="Dodson R.J."/>
            <person name="Daugherty S.C."/>
            <person name="Brinkac L.M."/>
            <person name="Sullivan S.A."/>
            <person name="Madupu R."/>
            <person name="Nelson K.E."/>
            <person name="Kang K.H."/>
            <person name="Impraim M."/>
            <person name="Tran K."/>
            <person name="Robinson J.M."/>
            <person name="Forberger H.A."/>
            <person name="Fraser C.M."/>
            <person name="Zinder S.H."/>
            <person name="Heidelberg J.F."/>
        </authorList>
    </citation>
    <scope>NUCLEOTIDE SEQUENCE [LARGE SCALE GENOMIC DNA]</scope>
    <source>
        <strain>ATCC BAA-2266 / KCTC 15142 / 195</strain>
    </source>
</reference>
<gene>
    <name evidence="1" type="primary">hisS</name>
    <name type="ordered locus">DET0006</name>
</gene>
<accession>Q3ZAI8</accession>
<dbReference type="EC" id="6.1.1.21" evidence="1"/>
<dbReference type="EMBL" id="CP000027">
    <property type="protein sequence ID" value="AAW39179.1"/>
    <property type="molecule type" value="Genomic_DNA"/>
</dbReference>
<dbReference type="RefSeq" id="WP_010935816.1">
    <property type="nucleotide sequence ID" value="NC_002936.3"/>
</dbReference>
<dbReference type="SMR" id="Q3ZAI8"/>
<dbReference type="FunCoup" id="Q3ZAI8">
    <property type="interactions" value="325"/>
</dbReference>
<dbReference type="STRING" id="243164.DET0006"/>
<dbReference type="GeneID" id="3229137"/>
<dbReference type="KEGG" id="det:DET0006"/>
<dbReference type="PATRIC" id="fig|243164.10.peg.6"/>
<dbReference type="eggNOG" id="COG0124">
    <property type="taxonomic scope" value="Bacteria"/>
</dbReference>
<dbReference type="HOGENOM" id="CLU_025113_1_1_0"/>
<dbReference type="InParanoid" id="Q3ZAI8"/>
<dbReference type="Proteomes" id="UP000008289">
    <property type="component" value="Chromosome"/>
</dbReference>
<dbReference type="GO" id="GO:0005737">
    <property type="term" value="C:cytoplasm"/>
    <property type="evidence" value="ECO:0007669"/>
    <property type="project" value="UniProtKB-SubCell"/>
</dbReference>
<dbReference type="GO" id="GO:0005524">
    <property type="term" value="F:ATP binding"/>
    <property type="evidence" value="ECO:0007669"/>
    <property type="project" value="UniProtKB-UniRule"/>
</dbReference>
<dbReference type="GO" id="GO:0004821">
    <property type="term" value="F:histidine-tRNA ligase activity"/>
    <property type="evidence" value="ECO:0007669"/>
    <property type="project" value="UniProtKB-UniRule"/>
</dbReference>
<dbReference type="GO" id="GO:0006427">
    <property type="term" value="P:histidyl-tRNA aminoacylation"/>
    <property type="evidence" value="ECO:0007669"/>
    <property type="project" value="UniProtKB-UniRule"/>
</dbReference>
<dbReference type="CDD" id="cd00773">
    <property type="entry name" value="HisRS-like_core"/>
    <property type="match status" value="1"/>
</dbReference>
<dbReference type="Gene3D" id="3.40.50.800">
    <property type="entry name" value="Anticodon-binding domain"/>
    <property type="match status" value="1"/>
</dbReference>
<dbReference type="Gene3D" id="3.30.930.10">
    <property type="entry name" value="Bira Bifunctional Protein, Domain 2"/>
    <property type="match status" value="1"/>
</dbReference>
<dbReference type="HAMAP" id="MF_00127">
    <property type="entry name" value="His_tRNA_synth"/>
    <property type="match status" value="1"/>
</dbReference>
<dbReference type="InterPro" id="IPR006195">
    <property type="entry name" value="aa-tRNA-synth_II"/>
</dbReference>
<dbReference type="InterPro" id="IPR045864">
    <property type="entry name" value="aa-tRNA-synth_II/BPL/LPL"/>
</dbReference>
<dbReference type="InterPro" id="IPR004154">
    <property type="entry name" value="Anticodon-bd"/>
</dbReference>
<dbReference type="InterPro" id="IPR036621">
    <property type="entry name" value="Anticodon-bd_dom_sf"/>
</dbReference>
<dbReference type="InterPro" id="IPR015807">
    <property type="entry name" value="His-tRNA-ligase"/>
</dbReference>
<dbReference type="InterPro" id="IPR041715">
    <property type="entry name" value="HisRS-like_core"/>
</dbReference>
<dbReference type="InterPro" id="IPR004516">
    <property type="entry name" value="HisRS/HisZ"/>
</dbReference>
<dbReference type="NCBIfam" id="TIGR00442">
    <property type="entry name" value="hisS"/>
    <property type="match status" value="1"/>
</dbReference>
<dbReference type="PANTHER" id="PTHR43707:SF1">
    <property type="entry name" value="HISTIDINE--TRNA LIGASE, MITOCHONDRIAL-RELATED"/>
    <property type="match status" value="1"/>
</dbReference>
<dbReference type="PANTHER" id="PTHR43707">
    <property type="entry name" value="HISTIDYL-TRNA SYNTHETASE"/>
    <property type="match status" value="1"/>
</dbReference>
<dbReference type="Pfam" id="PF03129">
    <property type="entry name" value="HGTP_anticodon"/>
    <property type="match status" value="1"/>
</dbReference>
<dbReference type="Pfam" id="PF13393">
    <property type="entry name" value="tRNA-synt_His"/>
    <property type="match status" value="1"/>
</dbReference>
<dbReference type="PIRSF" id="PIRSF001549">
    <property type="entry name" value="His-tRNA_synth"/>
    <property type="match status" value="1"/>
</dbReference>
<dbReference type="SUPFAM" id="SSF52954">
    <property type="entry name" value="Class II aaRS ABD-related"/>
    <property type="match status" value="1"/>
</dbReference>
<dbReference type="SUPFAM" id="SSF55681">
    <property type="entry name" value="Class II aaRS and biotin synthetases"/>
    <property type="match status" value="1"/>
</dbReference>
<dbReference type="PROSITE" id="PS50862">
    <property type="entry name" value="AA_TRNA_LIGASE_II"/>
    <property type="match status" value="1"/>
</dbReference>
<feature type="chain" id="PRO_0000136151" description="Histidine--tRNA ligase">
    <location>
        <begin position="1"/>
        <end position="418"/>
    </location>
</feature>